<keyword id="KW-0997">Cell inner membrane</keyword>
<keyword id="KW-1003">Cell membrane</keyword>
<keyword id="KW-0472">Membrane</keyword>
<keyword id="KW-0812">Transmembrane</keyword>
<keyword id="KW-1133">Transmembrane helix</keyword>
<keyword id="KW-0813">Transport</keyword>
<comment type="function">
    <text evidence="1">Catalyzes the excretion of spermidine.</text>
</comment>
<comment type="subunit">
    <text evidence="1">Forms a complex with MdtJ.</text>
</comment>
<comment type="subcellular location">
    <subcellularLocation>
        <location evidence="1">Cell inner membrane</location>
        <topology evidence="1">Multi-pass membrane protein</topology>
    </subcellularLocation>
</comment>
<comment type="similarity">
    <text evidence="1">Belongs to the drug/metabolite transporter (DMT) superfamily. Small multidrug resistance (SMR) (TC 2.A.7.1) family. MdtI subfamily.</text>
</comment>
<comment type="sequence caution" evidence="2">
    <conflict type="frameshift">
        <sequence resource="EMBL" id="CP000026"/>
    </conflict>
</comment>
<protein>
    <recommendedName>
        <fullName evidence="1">Spermidine export protein MdtI</fullName>
    </recommendedName>
</protein>
<organism>
    <name type="scientific">Salmonella paratyphi A (strain ATCC 9150 / SARB42)</name>
    <dbReference type="NCBI Taxonomy" id="295319"/>
    <lineage>
        <taxon>Bacteria</taxon>
        <taxon>Pseudomonadati</taxon>
        <taxon>Pseudomonadota</taxon>
        <taxon>Gammaproteobacteria</taxon>
        <taxon>Enterobacterales</taxon>
        <taxon>Enterobacteriaceae</taxon>
        <taxon>Salmonella</taxon>
    </lineage>
</organism>
<name>MDTI_SALPA</name>
<dbReference type="EMBL" id="CP000026">
    <property type="status" value="NOT_ANNOTATED_CDS"/>
    <property type="molecule type" value="Genomic_DNA"/>
</dbReference>
<dbReference type="SMR" id="P0C7H7"/>
<dbReference type="Proteomes" id="UP000008185">
    <property type="component" value="Chromosome"/>
</dbReference>
<dbReference type="GO" id="GO:0005886">
    <property type="term" value="C:plasma membrane"/>
    <property type="evidence" value="ECO:0007669"/>
    <property type="project" value="UniProtKB-SubCell"/>
</dbReference>
<dbReference type="GO" id="GO:0015199">
    <property type="term" value="F:amino-acid betaine transmembrane transporter activity"/>
    <property type="evidence" value="ECO:0007669"/>
    <property type="project" value="TreeGrafter"/>
</dbReference>
<dbReference type="GO" id="GO:0015297">
    <property type="term" value="F:antiporter activity"/>
    <property type="evidence" value="ECO:0007669"/>
    <property type="project" value="TreeGrafter"/>
</dbReference>
<dbReference type="GO" id="GO:0015220">
    <property type="term" value="F:choline transmembrane transporter activity"/>
    <property type="evidence" value="ECO:0007669"/>
    <property type="project" value="TreeGrafter"/>
</dbReference>
<dbReference type="GO" id="GO:0015606">
    <property type="term" value="F:spermidine transmembrane transporter activity"/>
    <property type="evidence" value="ECO:0007669"/>
    <property type="project" value="UniProtKB-UniRule"/>
</dbReference>
<dbReference type="GO" id="GO:0031460">
    <property type="term" value="P:glycine betaine transport"/>
    <property type="evidence" value="ECO:0007669"/>
    <property type="project" value="TreeGrafter"/>
</dbReference>
<dbReference type="FunFam" id="1.10.3730.20:FF:000001">
    <property type="entry name" value="Quaternary ammonium compound resistance transporter SugE"/>
    <property type="match status" value="1"/>
</dbReference>
<dbReference type="Gene3D" id="1.10.3730.20">
    <property type="match status" value="1"/>
</dbReference>
<dbReference type="HAMAP" id="MF_01597">
    <property type="entry name" value="MdtI"/>
    <property type="match status" value="1"/>
</dbReference>
<dbReference type="InterPro" id="IPR000390">
    <property type="entry name" value="Small_drug/metabolite_transptr"/>
</dbReference>
<dbReference type="InterPro" id="IPR045324">
    <property type="entry name" value="Small_multidrug_res"/>
</dbReference>
<dbReference type="InterPro" id="IPR023737">
    <property type="entry name" value="Spermidine_export_MdtI"/>
</dbReference>
<dbReference type="NCBIfam" id="NF007934">
    <property type="entry name" value="PRK10650.1"/>
    <property type="match status" value="1"/>
</dbReference>
<dbReference type="PANTHER" id="PTHR30561">
    <property type="entry name" value="SMR FAMILY PROTON-DEPENDENT DRUG EFFLUX TRANSPORTER SUGE"/>
    <property type="match status" value="1"/>
</dbReference>
<dbReference type="PANTHER" id="PTHR30561:SF6">
    <property type="entry name" value="SPERMIDINE EXPORT PROTEIN MDTI"/>
    <property type="match status" value="1"/>
</dbReference>
<dbReference type="Pfam" id="PF00893">
    <property type="entry name" value="Multi_Drug_Res"/>
    <property type="match status" value="1"/>
</dbReference>
<dbReference type="SUPFAM" id="SSF103481">
    <property type="entry name" value="Multidrug resistance efflux transporter EmrE"/>
    <property type="match status" value="1"/>
</dbReference>
<proteinExistence type="inferred from homology"/>
<sequence length="109" mass="11654">MQQFEWIHGAWLGLAIVLEIAANVLLKFSDGFRRKCYGILSLAAVLAAFSALSQAVKGIDLSVAYALWGGFGIAATLAAGWVLFGQRLNPKGWVGVILLLAGMVMIKFA</sequence>
<feature type="chain" id="PRO_0000331146" description="Spermidine export protein MdtI">
    <location>
        <begin position="1"/>
        <end position="109"/>
    </location>
</feature>
<feature type="transmembrane region" description="Helical" evidence="1">
    <location>
        <begin position="6"/>
        <end position="26"/>
    </location>
</feature>
<feature type="transmembrane region" description="Helical" evidence="1">
    <location>
        <begin position="36"/>
        <end position="56"/>
    </location>
</feature>
<feature type="transmembrane region" description="Helical" evidence="1">
    <location>
        <begin position="64"/>
        <end position="84"/>
    </location>
</feature>
<feature type="transmembrane region" description="Helical" evidence="1">
    <location>
        <begin position="88"/>
        <end position="108"/>
    </location>
</feature>
<evidence type="ECO:0000255" key="1">
    <source>
        <dbReference type="HAMAP-Rule" id="MF_01597"/>
    </source>
</evidence>
<evidence type="ECO:0000305" key="2"/>
<gene>
    <name evidence="1" type="primary">mdtI</name>
    <name type="ordered locus">SPA1371</name>
</gene>
<accession>P0C7H7</accession>
<reference key="1">
    <citation type="journal article" date="2004" name="Nat. Genet.">
        <title>Comparison of genome degradation in Paratyphi A and Typhi, human-restricted serovars of Salmonella enterica that cause typhoid.</title>
        <authorList>
            <person name="McClelland M."/>
            <person name="Sanderson K.E."/>
            <person name="Clifton S.W."/>
            <person name="Latreille P."/>
            <person name="Porwollik S."/>
            <person name="Sabo A."/>
            <person name="Meyer R."/>
            <person name="Bieri T."/>
            <person name="Ozersky P."/>
            <person name="McLellan M."/>
            <person name="Harkins C.R."/>
            <person name="Wang C."/>
            <person name="Nguyen C."/>
            <person name="Berghoff A."/>
            <person name="Elliott G."/>
            <person name="Kohlberg S."/>
            <person name="Strong C."/>
            <person name="Du F."/>
            <person name="Carter J."/>
            <person name="Kremizki C."/>
            <person name="Layman D."/>
            <person name="Leonard S."/>
            <person name="Sun H."/>
            <person name="Fulton L."/>
            <person name="Nash W."/>
            <person name="Miner T."/>
            <person name="Minx P."/>
            <person name="Delehaunty K."/>
            <person name="Fronick C."/>
            <person name="Magrini V."/>
            <person name="Nhan M."/>
            <person name="Warren W."/>
            <person name="Florea L."/>
            <person name="Spieth J."/>
            <person name="Wilson R.K."/>
        </authorList>
    </citation>
    <scope>NUCLEOTIDE SEQUENCE [LARGE SCALE GENOMIC DNA]</scope>
    <source>
        <strain>ATCC 9150 / SARB42</strain>
    </source>
</reference>